<organism>
    <name type="scientific">Trichormus variabilis (strain ATCC 29413 / PCC 7937)</name>
    <name type="common">Anabaena variabilis</name>
    <dbReference type="NCBI Taxonomy" id="240292"/>
    <lineage>
        <taxon>Bacteria</taxon>
        <taxon>Bacillati</taxon>
        <taxon>Cyanobacteriota</taxon>
        <taxon>Cyanophyceae</taxon>
        <taxon>Nostocales</taxon>
        <taxon>Nostocaceae</taxon>
        <taxon>Trichormus</taxon>
    </lineage>
</organism>
<proteinExistence type="inferred from homology"/>
<feature type="propeptide" id="PRO_0000316073" evidence="1">
    <location>
        <begin position="1"/>
        <end position="8"/>
    </location>
</feature>
<feature type="chain" id="PRO_1000025976" description="Photosystem II reaction center protein K" evidence="1">
    <location>
        <begin position="9"/>
        <end position="45"/>
    </location>
</feature>
<feature type="transmembrane region" description="Helical" evidence="1">
    <location>
        <begin position="24"/>
        <end position="44"/>
    </location>
</feature>
<comment type="function">
    <text evidence="1">One of the components of the core complex of photosystem II (PSII). PSII is a light-driven water:plastoquinone oxidoreductase that uses light energy to abstract electrons from H(2)O, generating O(2) and a proton gradient subsequently used for ATP formation. It consists of a core antenna complex that captures photons, and an electron transfer chain that converts photonic excitation into a charge separation.</text>
</comment>
<comment type="subunit">
    <text evidence="1">PSII is composed of 1 copy each of membrane proteins PsbA, PsbB, PsbC, PsbD, PsbE, PsbF, PsbH, PsbI, PsbJ, PsbK, PsbL, PsbM, PsbT, PsbX, PsbY, PsbZ, Psb30/Ycf12, peripheral proteins PsbO, CyanoQ (PsbQ), PsbU, PsbV and a large number of cofactors. It forms dimeric complexes.</text>
</comment>
<comment type="subcellular location">
    <subcellularLocation>
        <location evidence="1">Cellular thylakoid membrane</location>
        <topology evidence="1">Single-pass membrane protein</topology>
    </subcellularLocation>
</comment>
<comment type="similarity">
    <text evidence="1">Belongs to the PsbK family.</text>
</comment>
<name>PSBK_TRIV2</name>
<keyword id="KW-0472">Membrane</keyword>
<keyword id="KW-0602">Photosynthesis</keyword>
<keyword id="KW-0604">Photosystem II</keyword>
<keyword id="KW-0674">Reaction center</keyword>
<keyword id="KW-0793">Thylakoid</keyword>
<keyword id="KW-0812">Transmembrane</keyword>
<keyword id="KW-1133">Transmembrane helix</keyword>
<accession>Q3M4K0</accession>
<dbReference type="EMBL" id="CP000117">
    <property type="protein sequence ID" value="ABA24086.1"/>
    <property type="molecule type" value="Genomic_DNA"/>
</dbReference>
<dbReference type="RefSeq" id="WP_010995059.1">
    <property type="nucleotide sequence ID" value="NC_007413.1"/>
</dbReference>
<dbReference type="SMR" id="Q3M4K0"/>
<dbReference type="STRING" id="240292.Ava_4488"/>
<dbReference type="KEGG" id="ava:Ava_4488"/>
<dbReference type="eggNOG" id="ENOG5032YQR">
    <property type="taxonomic scope" value="Bacteria"/>
</dbReference>
<dbReference type="HOGENOM" id="CLU_174355_0_0_3"/>
<dbReference type="Proteomes" id="UP000002533">
    <property type="component" value="Chromosome"/>
</dbReference>
<dbReference type="GO" id="GO:0009539">
    <property type="term" value="C:photosystem II reaction center"/>
    <property type="evidence" value="ECO:0007669"/>
    <property type="project" value="InterPro"/>
</dbReference>
<dbReference type="GO" id="GO:0031676">
    <property type="term" value="C:plasma membrane-derived thylakoid membrane"/>
    <property type="evidence" value="ECO:0007669"/>
    <property type="project" value="UniProtKB-SubCell"/>
</dbReference>
<dbReference type="GO" id="GO:0015979">
    <property type="term" value="P:photosynthesis"/>
    <property type="evidence" value="ECO:0007669"/>
    <property type="project" value="UniProtKB-UniRule"/>
</dbReference>
<dbReference type="HAMAP" id="MF_00441">
    <property type="entry name" value="PSII_PsbK"/>
    <property type="match status" value="1"/>
</dbReference>
<dbReference type="InterPro" id="IPR003687">
    <property type="entry name" value="PSII_PsbK"/>
</dbReference>
<dbReference type="InterPro" id="IPR037270">
    <property type="entry name" value="PSII_PsbK_sf"/>
</dbReference>
<dbReference type="NCBIfam" id="NF002715">
    <property type="entry name" value="PRK02553.1"/>
    <property type="match status" value="1"/>
</dbReference>
<dbReference type="PANTHER" id="PTHR35325">
    <property type="match status" value="1"/>
</dbReference>
<dbReference type="PANTHER" id="PTHR35325:SF1">
    <property type="entry name" value="PHOTOSYSTEM II REACTION CENTER PROTEIN K"/>
    <property type="match status" value="1"/>
</dbReference>
<dbReference type="Pfam" id="PF02533">
    <property type="entry name" value="PsbK"/>
    <property type="match status" value="1"/>
</dbReference>
<dbReference type="SUPFAM" id="SSF161037">
    <property type="entry name" value="Photosystem II reaction center protein K, PsbK"/>
    <property type="match status" value="1"/>
</dbReference>
<sequence length="45" mass="5060">MEAALLLAKLPEAYQIFDPLVDVLPIIPVFFLLLAFVWQAAVGFR</sequence>
<gene>
    <name evidence="1" type="primary">psbK</name>
    <name type="ordered locus">Ava_4488</name>
</gene>
<protein>
    <recommendedName>
        <fullName evidence="1">Photosystem II reaction center protein K</fullName>
        <shortName evidence="1">PSII-K</shortName>
    </recommendedName>
</protein>
<reference key="1">
    <citation type="journal article" date="2014" name="Stand. Genomic Sci.">
        <title>Complete genome sequence of Anabaena variabilis ATCC 29413.</title>
        <authorList>
            <person name="Thiel T."/>
            <person name="Pratte B.S."/>
            <person name="Zhong J."/>
            <person name="Goodwin L."/>
            <person name="Copeland A."/>
            <person name="Lucas S."/>
            <person name="Han C."/>
            <person name="Pitluck S."/>
            <person name="Land M.L."/>
            <person name="Kyrpides N.C."/>
            <person name="Woyke T."/>
        </authorList>
    </citation>
    <scope>NUCLEOTIDE SEQUENCE [LARGE SCALE GENOMIC DNA]</scope>
    <source>
        <strain>ATCC 29413 / PCC 7937</strain>
    </source>
</reference>
<evidence type="ECO:0000255" key="1">
    <source>
        <dbReference type="HAMAP-Rule" id="MF_00441"/>
    </source>
</evidence>